<comment type="function">
    <text evidence="1">Probably participates in a plant defense mechanism.</text>
</comment>
<comment type="domain">
    <text evidence="4">The presence of a 'disulfide through disulfide knot' structurally defines this protein as a knottin.</text>
</comment>
<comment type="PTM">
    <text evidence="1">This is a cyclic peptide.</text>
</comment>
<comment type="similarity">
    <text evidence="1">Belongs to the cyclotide family. Bracelet subfamily.</text>
</comment>
<comment type="caution">
    <text evidence="1">This peptide is cyclic. The start position was chosen by similarity to Oak1 (kalata B1) for which the DNA sequence is known.</text>
</comment>
<organism evidence="3">
    <name type="scientific">Viola diffusa</name>
    <dbReference type="NCBI Taxonomy" id="591085"/>
    <lineage>
        <taxon>Eukaryota</taxon>
        <taxon>Viridiplantae</taxon>
        <taxon>Streptophyta</taxon>
        <taxon>Embryophyta</taxon>
        <taxon>Tracheophyta</taxon>
        <taxon>Spermatophyta</taxon>
        <taxon>Magnoliopsida</taxon>
        <taxon>eudicotyledons</taxon>
        <taxon>Gunneridae</taxon>
        <taxon>Pentapetalae</taxon>
        <taxon>rosids</taxon>
        <taxon>fabids</taxon>
        <taxon>Malpighiales</taxon>
        <taxon>Violaceae</taxon>
        <taxon>Viola</taxon>
        <taxon>Viola subgen. Viola</taxon>
        <taxon>Viola sect. Plagiostigma</taxon>
        <taxon>Viola subsect. Diffusae</taxon>
    </lineage>
</organism>
<sequence length="30" mass="3140">GIPCGESCVFIPCISSVVGCSCKSKVCYRN</sequence>
<evidence type="ECO:0000255" key="1">
    <source>
        <dbReference type="PROSITE-ProRule" id="PRU00395"/>
    </source>
</evidence>
<evidence type="ECO:0000269" key="2">
    <source>
    </source>
</evidence>
<evidence type="ECO:0000303" key="3">
    <source>
    </source>
</evidence>
<evidence type="ECO:0000305" key="4"/>
<dbReference type="SMR" id="C0HKK0"/>
<dbReference type="GO" id="GO:0006952">
    <property type="term" value="P:defense response"/>
    <property type="evidence" value="ECO:0007669"/>
    <property type="project" value="UniProtKB-KW"/>
</dbReference>
<dbReference type="InterPro" id="IPR005535">
    <property type="entry name" value="Cyclotide"/>
</dbReference>
<dbReference type="InterPro" id="IPR012323">
    <property type="entry name" value="Cyclotide_bracelet_CS"/>
</dbReference>
<dbReference type="InterPro" id="IPR036146">
    <property type="entry name" value="Cyclotide_sf"/>
</dbReference>
<dbReference type="Pfam" id="PF03784">
    <property type="entry name" value="Cyclotide"/>
    <property type="match status" value="1"/>
</dbReference>
<dbReference type="PIRSF" id="PIRSF037891">
    <property type="entry name" value="Cycloviolacin"/>
    <property type="match status" value="1"/>
</dbReference>
<dbReference type="SUPFAM" id="SSF57038">
    <property type="entry name" value="Cyclotides"/>
    <property type="match status" value="1"/>
</dbReference>
<dbReference type="PROSITE" id="PS51052">
    <property type="entry name" value="CYCLOTIDE"/>
    <property type="match status" value="1"/>
</dbReference>
<dbReference type="PROSITE" id="PS60008">
    <property type="entry name" value="CYCLOTIDE_BRACELET"/>
    <property type="match status" value="1"/>
</dbReference>
<protein>
    <recommendedName>
        <fullName evidence="3">Cyclotide vdif-A</fullName>
    </recommendedName>
</protein>
<feature type="peptide" id="PRO_0000441356" description="Cyclotide vdif-A" evidence="2">
    <location>
        <begin position="1"/>
        <end position="30"/>
    </location>
</feature>
<feature type="disulfide bond" evidence="1">
    <location>
        <begin position="4"/>
        <end position="20"/>
    </location>
</feature>
<feature type="disulfide bond" evidence="1">
    <location>
        <begin position="8"/>
        <end position="22"/>
    </location>
</feature>
<feature type="disulfide bond" evidence="1">
    <location>
        <begin position="13"/>
        <end position="27"/>
    </location>
</feature>
<feature type="cross-link" description="Cyclopeptide (Gly-Asn)" evidence="3">
    <location>
        <begin position="1"/>
        <end position="30"/>
    </location>
</feature>
<reference evidence="4" key="1">
    <citation type="journal article" date="2017" name="J. Nat. Prod.">
        <title>Understanding the Diversity and Distribution of Cyclotides from Plants of Varied Genetic Origin.</title>
        <authorList>
            <person name="Ravipati A.S."/>
            <person name="Poth A.G."/>
            <person name="Troeira Henriques S."/>
            <person name="Bhandari M."/>
            <person name="Huang Y.H."/>
            <person name="Nino J."/>
            <person name="Colgrave M.L."/>
            <person name="Craik D.J."/>
        </authorList>
    </citation>
    <scope>PROTEIN SEQUENCE</scope>
</reference>
<name>CYVIA_VIODI</name>
<proteinExistence type="evidence at protein level"/>
<keyword id="KW-0903">Direct protein sequencing</keyword>
<keyword id="KW-1015">Disulfide bond</keyword>
<keyword id="KW-0611">Plant defense</keyword>
<accession>C0HKK0</accession>